<protein>
    <recommendedName>
        <fullName evidence="2">Major outer membrane lipoprotein Lpp 1</fullName>
    </recommendedName>
    <alternativeName>
        <fullName evidence="2">Braun lipoprotein 1</fullName>
        <shortName evidence="2">BLP 1</shortName>
    </alternativeName>
    <alternativeName>
        <fullName evidence="2">Murein lipoprotein 1</fullName>
    </alternativeName>
</protein>
<accession>Q7CQN4</accession>
<accession>Q6VPQ4</accession>
<reference key="1">
    <citation type="journal article" date="2004" name="Infect. Immun.">
        <title>The two murein lipoproteins of Salmonella enterica serovar typhimurium contribute to the virulence of the organism.</title>
        <authorList>
            <person name="Sha J."/>
            <person name="Fadl A.A."/>
            <person name="Klimpel G.R."/>
            <person name="Niesel D.W."/>
            <person name="Popov V.L."/>
            <person name="Chopra A.K."/>
        </authorList>
    </citation>
    <scope>NUCLEOTIDE SEQUENCE [GENOMIC DNA]</scope>
    <scope>FUNCTION</scope>
    <scope>DISRUPTION PHENOTYPE</scope>
</reference>
<reference key="2">
    <citation type="journal article" date="2001" name="Nature">
        <title>Complete genome sequence of Salmonella enterica serovar Typhimurium LT2.</title>
        <authorList>
            <person name="McClelland M."/>
            <person name="Sanderson K.E."/>
            <person name="Spieth J."/>
            <person name="Clifton S.W."/>
            <person name="Latreille P."/>
            <person name="Courtney L."/>
            <person name="Porwollik S."/>
            <person name="Ali J."/>
            <person name="Dante M."/>
            <person name="Du F."/>
            <person name="Hou S."/>
            <person name="Layman D."/>
            <person name="Leonard S."/>
            <person name="Nguyen C."/>
            <person name="Scott K."/>
            <person name="Holmes A."/>
            <person name="Grewal N."/>
            <person name="Mulvaney E."/>
            <person name="Ryan E."/>
            <person name="Sun H."/>
            <person name="Florea L."/>
            <person name="Miller W."/>
            <person name="Stoneking T."/>
            <person name="Nhan M."/>
            <person name="Waterston R."/>
            <person name="Wilson R.K."/>
        </authorList>
    </citation>
    <scope>NUCLEOTIDE SEQUENCE [LARGE SCALE GENOMIC DNA]</scope>
    <source>
        <strain>LT2 / SGSC1412 / ATCC 700720</strain>
    </source>
</reference>
<proteinExistence type="inferred from homology"/>
<comment type="function">
    <text evidence="2 4">Plays an important role in virulence (PubMed:15213144). A highly abundant outer membrane lipoprotein that controls the distance between the inner and outer membranes. The only protein known to be covalently linked to the peptidoglycan network (PGN). Also non-covalently binds the PGN. The link between the cell outer membrane and PGN contributes to maintenance of the structural and functional integrity of the cell envelope, and maintains the correct distance between the PGN and the outer membrane (By similarity).</text>
</comment>
<comment type="subunit">
    <text evidence="2">Homotrimer.</text>
</comment>
<comment type="subcellular location">
    <subcellularLocation>
        <location evidence="2">Cell outer membrane</location>
        <topology evidence="2">Lipid-anchor</topology>
        <orientation evidence="2">Periplasmic side</orientation>
    </subcellularLocation>
    <subcellularLocation>
        <location evidence="2">Secreted</location>
        <location evidence="2">Cell wall</location>
        <topology evidence="2">Peptidoglycan-anchor</topology>
    </subcellularLocation>
    <text evidence="2">Attached via its lipidated N-terminus to the inner leaflet of the outer membrane. Attached to the peptidoglycan network (PGN) via its C-terminus.</text>
</comment>
<comment type="induction">
    <text evidence="1">This gene is probably the major expressed form.</text>
</comment>
<comment type="disruption phenotype">
    <text evidence="4">The integrity of the cell envelope in a lpp null mutant (double-knockout) is not affected.</text>
</comment>
<comment type="similarity">
    <text evidence="2">Belongs to the Lpp family.</text>
</comment>
<name>LPP1_SALTY</name>
<gene>
    <name evidence="2" type="primary">lpp1</name>
    <name type="synonym">lppA</name>
    <name type="ordered locus">STM1377</name>
</gene>
<dbReference type="EMBL" id="AY333760">
    <property type="protein sequence ID" value="AAR02620.1"/>
    <property type="molecule type" value="Genomic_DNA"/>
</dbReference>
<dbReference type="EMBL" id="AE006468">
    <property type="protein sequence ID" value="AAL20301.1"/>
    <property type="molecule type" value="Genomic_DNA"/>
</dbReference>
<dbReference type="SMR" id="Q7CQN4"/>
<dbReference type="STRING" id="99287.STM1377"/>
<dbReference type="PaxDb" id="99287-STM1377"/>
<dbReference type="KEGG" id="stm:STM1377"/>
<dbReference type="PATRIC" id="fig|99287.12.peg.1460"/>
<dbReference type="HOGENOM" id="CLU_166934_2_1_6"/>
<dbReference type="OMA" id="QSSAYHK"/>
<dbReference type="PhylomeDB" id="Q7CQN4"/>
<dbReference type="BioCyc" id="SENT99287:STM1377-MONOMER"/>
<dbReference type="Proteomes" id="UP000001014">
    <property type="component" value="Chromosome"/>
</dbReference>
<dbReference type="GO" id="GO:0009279">
    <property type="term" value="C:cell outer membrane"/>
    <property type="evidence" value="ECO:0007669"/>
    <property type="project" value="UniProtKB-SubCell"/>
</dbReference>
<dbReference type="GO" id="GO:0005576">
    <property type="term" value="C:extracellular region"/>
    <property type="evidence" value="ECO:0007669"/>
    <property type="project" value="UniProtKB-KW"/>
</dbReference>
<dbReference type="GO" id="GO:0008289">
    <property type="term" value="F:lipid binding"/>
    <property type="evidence" value="ECO:0007669"/>
    <property type="project" value="UniProtKB-UniRule"/>
</dbReference>
<dbReference type="GO" id="GO:0042834">
    <property type="term" value="F:peptidoglycan binding"/>
    <property type="evidence" value="ECO:0007669"/>
    <property type="project" value="UniProtKB-UniRule"/>
</dbReference>
<dbReference type="GO" id="GO:0030258">
    <property type="term" value="P:lipid modification"/>
    <property type="evidence" value="ECO:0007669"/>
    <property type="project" value="UniProtKB-UniRule"/>
</dbReference>
<dbReference type="GO" id="GO:0043580">
    <property type="term" value="P:periplasmic space organization"/>
    <property type="evidence" value="ECO:0007669"/>
    <property type="project" value="UniProtKB-UniRule"/>
</dbReference>
<dbReference type="FunFam" id="1.20.5.190:FF:000002">
    <property type="entry name" value="Major outer membrane lipoprotein"/>
    <property type="match status" value="1"/>
</dbReference>
<dbReference type="Gene3D" id="1.20.5.190">
    <property type="match status" value="1"/>
</dbReference>
<dbReference type="HAMAP" id="MF_00843">
    <property type="entry name" value="Lpp"/>
    <property type="match status" value="1"/>
</dbReference>
<dbReference type="InterPro" id="IPR006817">
    <property type="entry name" value="Lipoprotein_leucine-zipper_dom"/>
</dbReference>
<dbReference type="InterPro" id="IPR016367">
    <property type="entry name" value="MOM_Lpp"/>
</dbReference>
<dbReference type="NCBIfam" id="NF040598">
    <property type="entry name" value="Ala_zip_lipo"/>
    <property type="match status" value="1"/>
</dbReference>
<dbReference type="NCBIfam" id="NF011925">
    <property type="entry name" value="PRK15396.1"/>
    <property type="match status" value="1"/>
</dbReference>
<dbReference type="PANTHER" id="PTHR38763:SF1">
    <property type="entry name" value="MAJOR OUTER MEMBRANE LIPOPROTEIN LPP"/>
    <property type="match status" value="1"/>
</dbReference>
<dbReference type="PANTHER" id="PTHR38763">
    <property type="entry name" value="MAJOR OUTER MEMBRANE PROLIPOPROTEIN LPP"/>
    <property type="match status" value="1"/>
</dbReference>
<dbReference type="Pfam" id="PF04728">
    <property type="entry name" value="LPP"/>
    <property type="match status" value="1"/>
</dbReference>
<dbReference type="PIRSF" id="PIRSF002855">
    <property type="entry name" value="Murein-lipoprotein"/>
    <property type="match status" value="1"/>
</dbReference>
<dbReference type="SUPFAM" id="SSF58042">
    <property type="entry name" value="Outer membrane lipoprotein"/>
    <property type="match status" value="1"/>
</dbReference>
<dbReference type="PROSITE" id="PS51257">
    <property type="entry name" value="PROKAR_LIPOPROTEIN"/>
    <property type="match status" value="1"/>
</dbReference>
<sequence length="78" mass="8391">MNRTKLVLGAVILGSTLLAGCSSNAKIDQLSSDVQTLNAKVDQLSNDVNAMRSDVQAAKDDAARANQRLDNQATKYRK</sequence>
<evidence type="ECO:0000250" key="1">
    <source>
        <dbReference type="UniProtKB" id="E8XH70"/>
    </source>
</evidence>
<evidence type="ECO:0000255" key="2">
    <source>
        <dbReference type="HAMAP-Rule" id="MF_00843"/>
    </source>
</evidence>
<evidence type="ECO:0000256" key="3">
    <source>
        <dbReference type="SAM" id="MobiDB-lite"/>
    </source>
</evidence>
<evidence type="ECO:0000269" key="4">
    <source>
    </source>
</evidence>
<keyword id="KW-0998">Cell outer membrane</keyword>
<keyword id="KW-0134">Cell wall</keyword>
<keyword id="KW-0175">Coiled coil</keyword>
<keyword id="KW-0449">Lipoprotein</keyword>
<keyword id="KW-0472">Membrane</keyword>
<keyword id="KW-0564">Palmitate</keyword>
<keyword id="KW-0572">Peptidoglycan-anchor</keyword>
<keyword id="KW-1185">Reference proteome</keyword>
<keyword id="KW-0677">Repeat</keyword>
<keyword id="KW-0964">Secreted</keyword>
<keyword id="KW-0732">Signal</keyword>
<keyword id="KW-0843">Virulence</keyword>
<organism>
    <name type="scientific">Salmonella typhimurium (strain LT2 / SGSC1412 / ATCC 700720)</name>
    <dbReference type="NCBI Taxonomy" id="99287"/>
    <lineage>
        <taxon>Bacteria</taxon>
        <taxon>Pseudomonadati</taxon>
        <taxon>Pseudomonadota</taxon>
        <taxon>Gammaproteobacteria</taxon>
        <taxon>Enterobacterales</taxon>
        <taxon>Enterobacteriaceae</taxon>
        <taxon>Salmonella</taxon>
    </lineage>
</organism>
<feature type="signal peptide" evidence="2">
    <location>
        <begin position="1"/>
        <end position="20"/>
    </location>
</feature>
<feature type="chain" id="PRO_0000018344" description="Major outer membrane lipoprotein Lpp 1" evidence="2">
    <location>
        <begin position="21"/>
        <end position="78"/>
    </location>
</feature>
<feature type="repeat" evidence="2">
    <location>
        <begin position="24"/>
        <end position="34"/>
    </location>
</feature>
<feature type="repeat" evidence="2">
    <location>
        <begin position="38"/>
        <end position="48"/>
    </location>
</feature>
<feature type="region of interest" description="Disordered" evidence="3">
    <location>
        <begin position="56"/>
        <end position="78"/>
    </location>
</feature>
<feature type="coiled-coil region" evidence="2">
    <location>
        <begin position="27"/>
        <end position="75"/>
    </location>
</feature>
<feature type="compositionally biased region" description="Polar residues" evidence="3">
    <location>
        <begin position="68"/>
        <end position="78"/>
    </location>
</feature>
<feature type="modified residue" description="N6-murein peptidoglycan lysine" evidence="2">
    <location>
        <position position="78"/>
    </location>
</feature>
<feature type="lipid moiety-binding region" description="N-palmitoyl cysteine" evidence="2">
    <location>
        <position position="21"/>
    </location>
</feature>
<feature type="lipid moiety-binding region" description="S-diacylglycerol cysteine" evidence="2">
    <location>
        <position position="21"/>
    </location>
</feature>